<accession>Q02RB1</accession>
<proteinExistence type="inferred from homology"/>
<sequence length="316" mass="34947">MNPNFLDFEQPIADLQAKIEELRLVGNDNALNISDEISRLQDKSKALTENIFGNLSSWQIAQLARHPKRPYTLDYIGYLFSDFEELHGDRHFADDPAIVGGVARLDGSPVMVIGHQKGREVREKVRRNFGMPRPEGYRKACRLMEMAERFKMPILTFIDTPGAYPGIDAEERGQSEAIAWNLRVMARLKTPIIATVIGEGGSGGALAIGVCDQLNMLQYSTYSVISPEGCASILWKTAEKAPEAAEAMGITAERLKGLGIVDKVIDEPLGGAHRDPASMAESIRGELLAQLKMLQGLEMGELLERRYDRLMSYGAP</sequence>
<keyword id="KW-0067">ATP-binding</keyword>
<keyword id="KW-0963">Cytoplasm</keyword>
<keyword id="KW-0275">Fatty acid biosynthesis</keyword>
<keyword id="KW-0276">Fatty acid metabolism</keyword>
<keyword id="KW-0444">Lipid biosynthesis</keyword>
<keyword id="KW-0443">Lipid metabolism</keyword>
<keyword id="KW-0547">Nucleotide-binding</keyword>
<keyword id="KW-0808">Transferase</keyword>
<protein>
    <recommendedName>
        <fullName evidence="1">Acetyl-coenzyme A carboxylase carboxyl transferase subunit alpha</fullName>
        <shortName evidence="1">ACCase subunit alpha</shortName>
        <shortName evidence="1">Acetyl-CoA carboxylase carboxyltransferase subunit alpha</shortName>
        <ecNumber evidence="1">2.1.3.15</ecNumber>
    </recommendedName>
</protein>
<dbReference type="EC" id="2.1.3.15" evidence="1"/>
<dbReference type="EMBL" id="CP000438">
    <property type="protein sequence ID" value="ABJ12872.1"/>
    <property type="molecule type" value="Genomic_DNA"/>
</dbReference>
<dbReference type="RefSeq" id="WP_003109333.1">
    <property type="nucleotide sequence ID" value="NZ_CP034244.1"/>
</dbReference>
<dbReference type="SMR" id="Q02RB1"/>
<dbReference type="GeneID" id="77219880"/>
<dbReference type="KEGG" id="pau:PA14_17270"/>
<dbReference type="PseudoCAP" id="PA14_17270"/>
<dbReference type="HOGENOM" id="CLU_015486_0_2_6"/>
<dbReference type="BioCyc" id="PAER208963:G1G74-1422-MONOMER"/>
<dbReference type="UniPathway" id="UPA00655">
    <property type="reaction ID" value="UER00711"/>
</dbReference>
<dbReference type="Proteomes" id="UP000000653">
    <property type="component" value="Chromosome"/>
</dbReference>
<dbReference type="GO" id="GO:0009317">
    <property type="term" value="C:acetyl-CoA carboxylase complex"/>
    <property type="evidence" value="ECO:0007669"/>
    <property type="project" value="InterPro"/>
</dbReference>
<dbReference type="GO" id="GO:0003989">
    <property type="term" value="F:acetyl-CoA carboxylase activity"/>
    <property type="evidence" value="ECO:0007669"/>
    <property type="project" value="InterPro"/>
</dbReference>
<dbReference type="GO" id="GO:0005524">
    <property type="term" value="F:ATP binding"/>
    <property type="evidence" value="ECO:0007669"/>
    <property type="project" value="UniProtKB-KW"/>
</dbReference>
<dbReference type="GO" id="GO:0016743">
    <property type="term" value="F:carboxyl- or carbamoyltransferase activity"/>
    <property type="evidence" value="ECO:0007669"/>
    <property type="project" value="UniProtKB-UniRule"/>
</dbReference>
<dbReference type="GO" id="GO:0006633">
    <property type="term" value="P:fatty acid biosynthetic process"/>
    <property type="evidence" value="ECO:0007669"/>
    <property type="project" value="UniProtKB-KW"/>
</dbReference>
<dbReference type="GO" id="GO:2001295">
    <property type="term" value="P:malonyl-CoA biosynthetic process"/>
    <property type="evidence" value="ECO:0007669"/>
    <property type="project" value="UniProtKB-UniRule"/>
</dbReference>
<dbReference type="FunFam" id="3.90.226.10:FF:000008">
    <property type="entry name" value="Acetyl-coenzyme A carboxylase carboxyl transferase subunit alpha"/>
    <property type="match status" value="1"/>
</dbReference>
<dbReference type="Gene3D" id="3.90.226.10">
    <property type="entry name" value="2-enoyl-CoA Hydratase, Chain A, domain 1"/>
    <property type="match status" value="1"/>
</dbReference>
<dbReference type="HAMAP" id="MF_00823">
    <property type="entry name" value="AcetylCoA_CT_alpha"/>
    <property type="match status" value="1"/>
</dbReference>
<dbReference type="InterPro" id="IPR001095">
    <property type="entry name" value="Acetyl_CoA_COase_a_su"/>
</dbReference>
<dbReference type="InterPro" id="IPR029045">
    <property type="entry name" value="ClpP/crotonase-like_dom_sf"/>
</dbReference>
<dbReference type="InterPro" id="IPR011763">
    <property type="entry name" value="COA_CT_C"/>
</dbReference>
<dbReference type="NCBIfam" id="TIGR00513">
    <property type="entry name" value="accA"/>
    <property type="match status" value="1"/>
</dbReference>
<dbReference type="NCBIfam" id="NF041504">
    <property type="entry name" value="AccA_sub"/>
    <property type="match status" value="1"/>
</dbReference>
<dbReference type="NCBIfam" id="NF004344">
    <property type="entry name" value="PRK05724.1"/>
    <property type="match status" value="1"/>
</dbReference>
<dbReference type="PANTHER" id="PTHR42853">
    <property type="entry name" value="ACETYL-COENZYME A CARBOXYLASE CARBOXYL TRANSFERASE SUBUNIT ALPHA"/>
    <property type="match status" value="1"/>
</dbReference>
<dbReference type="PANTHER" id="PTHR42853:SF3">
    <property type="entry name" value="ACETYL-COENZYME A CARBOXYLASE CARBOXYL TRANSFERASE SUBUNIT ALPHA, CHLOROPLASTIC"/>
    <property type="match status" value="1"/>
</dbReference>
<dbReference type="Pfam" id="PF03255">
    <property type="entry name" value="ACCA"/>
    <property type="match status" value="1"/>
</dbReference>
<dbReference type="PRINTS" id="PR01069">
    <property type="entry name" value="ACCCTRFRASEA"/>
</dbReference>
<dbReference type="SUPFAM" id="SSF52096">
    <property type="entry name" value="ClpP/crotonase"/>
    <property type="match status" value="1"/>
</dbReference>
<dbReference type="PROSITE" id="PS50989">
    <property type="entry name" value="COA_CT_CTER"/>
    <property type="match status" value="1"/>
</dbReference>
<evidence type="ECO:0000255" key="1">
    <source>
        <dbReference type="HAMAP-Rule" id="MF_00823"/>
    </source>
</evidence>
<evidence type="ECO:0000255" key="2">
    <source>
        <dbReference type="PROSITE-ProRule" id="PRU01137"/>
    </source>
</evidence>
<comment type="function">
    <text evidence="1">Component of the acetyl coenzyme A carboxylase (ACC) complex. First, biotin carboxylase catalyzes the carboxylation of biotin on its carrier protein (BCCP) and then the CO(2) group is transferred by the carboxyltransferase to acetyl-CoA to form malonyl-CoA.</text>
</comment>
<comment type="catalytic activity">
    <reaction evidence="1">
        <text>N(6)-carboxybiotinyl-L-lysyl-[protein] + acetyl-CoA = N(6)-biotinyl-L-lysyl-[protein] + malonyl-CoA</text>
        <dbReference type="Rhea" id="RHEA:54728"/>
        <dbReference type="Rhea" id="RHEA-COMP:10505"/>
        <dbReference type="Rhea" id="RHEA-COMP:10506"/>
        <dbReference type="ChEBI" id="CHEBI:57288"/>
        <dbReference type="ChEBI" id="CHEBI:57384"/>
        <dbReference type="ChEBI" id="CHEBI:83144"/>
        <dbReference type="ChEBI" id="CHEBI:83145"/>
        <dbReference type="EC" id="2.1.3.15"/>
    </reaction>
</comment>
<comment type="pathway">
    <text evidence="1">Lipid metabolism; malonyl-CoA biosynthesis; malonyl-CoA from acetyl-CoA: step 1/1.</text>
</comment>
<comment type="subunit">
    <text evidence="1">Acetyl-CoA carboxylase is a heterohexamer composed of biotin carboxyl carrier protein (AccB), biotin carboxylase (AccC) and two subunits each of ACCase subunit alpha (AccA) and ACCase subunit beta (AccD).</text>
</comment>
<comment type="subcellular location">
    <subcellularLocation>
        <location evidence="1">Cytoplasm</location>
    </subcellularLocation>
</comment>
<comment type="similarity">
    <text evidence="1">Belongs to the AccA family.</text>
</comment>
<gene>
    <name evidence="1" type="primary">accA</name>
    <name type="ordered locus">PA14_17270</name>
</gene>
<name>ACCA_PSEAB</name>
<reference key="1">
    <citation type="journal article" date="2006" name="Genome Biol.">
        <title>Genomic analysis reveals that Pseudomonas aeruginosa virulence is combinatorial.</title>
        <authorList>
            <person name="Lee D.G."/>
            <person name="Urbach J.M."/>
            <person name="Wu G."/>
            <person name="Liberati N.T."/>
            <person name="Feinbaum R.L."/>
            <person name="Miyata S."/>
            <person name="Diggins L.T."/>
            <person name="He J."/>
            <person name="Saucier M."/>
            <person name="Deziel E."/>
            <person name="Friedman L."/>
            <person name="Li L."/>
            <person name="Grills G."/>
            <person name="Montgomery K."/>
            <person name="Kucherlapati R."/>
            <person name="Rahme L.G."/>
            <person name="Ausubel F.M."/>
        </authorList>
    </citation>
    <scope>NUCLEOTIDE SEQUENCE [LARGE SCALE GENOMIC DNA]</scope>
    <source>
        <strain>UCBPP-PA14</strain>
    </source>
</reference>
<organism>
    <name type="scientific">Pseudomonas aeruginosa (strain UCBPP-PA14)</name>
    <dbReference type="NCBI Taxonomy" id="208963"/>
    <lineage>
        <taxon>Bacteria</taxon>
        <taxon>Pseudomonadati</taxon>
        <taxon>Pseudomonadota</taxon>
        <taxon>Gammaproteobacteria</taxon>
        <taxon>Pseudomonadales</taxon>
        <taxon>Pseudomonadaceae</taxon>
        <taxon>Pseudomonas</taxon>
    </lineage>
</organism>
<feature type="chain" id="PRO_1000062656" description="Acetyl-coenzyme A carboxylase carboxyl transferase subunit alpha">
    <location>
        <begin position="1"/>
        <end position="316"/>
    </location>
</feature>
<feature type="domain" description="CoA carboxyltransferase C-terminal" evidence="2">
    <location>
        <begin position="39"/>
        <end position="293"/>
    </location>
</feature>